<keyword id="KW-0067">ATP-binding</keyword>
<keyword id="KW-0963">Cytoplasm</keyword>
<keyword id="KW-0227">DNA damage</keyword>
<keyword id="KW-0228">DNA excision</keyword>
<keyword id="KW-0234">DNA repair</keyword>
<keyword id="KW-0267">Excision nuclease</keyword>
<keyword id="KW-0547">Nucleotide-binding</keyword>
<keyword id="KW-1185">Reference proteome</keyword>
<keyword id="KW-0742">SOS response</keyword>
<gene>
    <name evidence="1" type="primary">uvrB</name>
    <name type="ordered locus">SDY_0827</name>
</gene>
<proteinExistence type="inferred from homology"/>
<dbReference type="EMBL" id="CP000034">
    <property type="protein sequence ID" value="ABB61009.1"/>
    <property type="molecule type" value="Genomic_DNA"/>
</dbReference>
<dbReference type="RefSeq" id="WP_000042529.1">
    <property type="nucleotide sequence ID" value="NC_007606.1"/>
</dbReference>
<dbReference type="RefSeq" id="YP_402498.1">
    <property type="nucleotide sequence ID" value="NC_007606.1"/>
</dbReference>
<dbReference type="SMR" id="Q32I48"/>
<dbReference type="STRING" id="300267.SDY_0827"/>
<dbReference type="EnsemblBacteria" id="ABB61009">
    <property type="protein sequence ID" value="ABB61009"/>
    <property type="gene ID" value="SDY_0827"/>
</dbReference>
<dbReference type="KEGG" id="sdy:SDY_0827"/>
<dbReference type="PATRIC" id="fig|300267.13.peg.953"/>
<dbReference type="HOGENOM" id="CLU_009621_2_1_6"/>
<dbReference type="Proteomes" id="UP000002716">
    <property type="component" value="Chromosome"/>
</dbReference>
<dbReference type="GO" id="GO:0005737">
    <property type="term" value="C:cytoplasm"/>
    <property type="evidence" value="ECO:0007669"/>
    <property type="project" value="UniProtKB-SubCell"/>
</dbReference>
<dbReference type="GO" id="GO:0009380">
    <property type="term" value="C:excinuclease repair complex"/>
    <property type="evidence" value="ECO:0007669"/>
    <property type="project" value="InterPro"/>
</dbReference>
<dbReference type="GO" id="GO:0005524">
    <property type="term" value="F:ATP binding"/>
    <property type="evidence" value="ECO:0007669"/>
    <property type="project" value="UniProtKB-UniRule"/>
</dbReference>
<dbReference type="GO" id="GO:0016887">
    <property type="term" value="F:ATP hydrolysis activity"/>
    <property type="evidence" value="ECO:0007669"/>
    <property type="project" value="InterPro"/>
</dbReference>
<dbReference type="GO" id="GO:0003677">
    <property type="term" value="F:DNA binding"/>
    <property type="evidence" value="ECO:0007669"/>
    <property type="project" value="UniProtKB-UniRule"/>
</dbReference>
<dbReference type="GO" id="GO:0009381">
    <property type="term" value="F:excinuclease ABC activity"/>
    <property type="evidence" value="ECO:0007669"/>
    <property type="project" value="UniProtKB-UniRule"/>
</dbReference>
<dbReference type="GO" id="GO:0006289">
    <property type="term" value="P:nucleotide-excision repair"/>
    <property type="evidence" value="ECO:0007669"/>
    <property type="project" value="UniProtKB-UniRule"/>
</dbReference>
<dbReference type="GO" id="GO:0009432">
    <property type="term" value="P:SOS response"/>
    <property type="evidence" value="ECO:0007669"/>
    <property type="project" value="UniProtKB-UniRule"/>
</dbReference>
<dbReference type="CDD" id="cd17916">
    <property type="entry name" value="DEXHc_UvrB"/>
    <property type="match status" value="1"/>
</dbReference>
<dbReference type="CDD" id="cd18790">
    <property type="entry name" value="SF2_C_UvrB"/>
    <property type="match status" value="1"/>
</dbReference>
<dbReference type="FunFam" id="3.40.50.300:FF:000257">
    <property type="entry name" value="UvrABC system protein B"/>
    <property type="match status" value="1"/>
</dbReference>
<dbReference type="FunFam" id="3.40.50.300:FF:000401">
    <property type="entry name" value="UvrABC system protein B"/>
    <property type="match status" value="1"/>
</dbReference>
<dbReference type="FunFam" id="3.40.50.300:FF:000477">
    <property type="entry name" value="UvrABC system protein B"/>
    <property type="match status" value="1"/>
</dbReference>
<dbReference type="Gene3D" id="3.40.50.300">
    <property type="entry name" value="P-loop containing nucleotide triphosphate hydrolases"/>
    <property type="match status" value="3"/>
</dbReference>
<dbReference type="Gene3D" id="4.10.860.10">
    <property type="entry name" value="UVR domain"/>
    <property type="match status" value="1"/>
</dbReference>
<dbReference type="HAMAP" id="MF_00204">
    <property type="entry name" value="UvrB"/>
    <property type="match status" value="1"/>
</dbReference>
<dbReference type="InterPro" id="IPR006935">
    <property type="entry name" value="Helicase/UvrB_N"/>
</dbReference>
<dbReference type="InterPro" id="IPR014001">
    <property type="entry name" value="Helicase_ATP-bd"/>
</dbReference>
<dbReference type="InterPro" id="IPR001650">
    <property type="entry name" value="Helicase_C-like"/>
</dbReference>
<dbReference type="InterPro" id="IPR027417">
    <property type="entry name" value="P-loop_NTPase"/>
</dbReference>
<dbReference type="InterPro" id="IPR001943">
    <property type="entry name" value="UVR_dom"/>
</dbReference>
<dbReference type="InterPro" id="IPR036876">
    <property type="entry name" value="UVR_dom_sf"/>
</dbReference>
<dbReference type="InterPro" id="IPR004807">
    <property type="entry name" value="UvrB"/>
</dbReference>
<dbReference type="InterPro" id="IPR041471">
    <property type="entry name" value="UvrB_inter"/>
</dbReference>
<dbReference type="InterPro" id="IPR024759">
    <property type="entry name" value="UvrB_YAD/RRR_dom"/>
</dbReference>
<dbReference type="NCBIfam" id="NF003673">
    <property type="entry name" value="PRK05298.1"/>
    <property type="match status" value="1"/>
</dbReference>
<dbReference type="NCBIfam" id="TIGR00631">
    <property type="entry name" value="uvrb"/>
    <property type="match status" value="1"/>
</dbReference>
<dbReference type="PANTHER" id="PTHR24029">
    <property type="entry name" value="UVRABC SYSTEM PROTEIN B"/>
    <property type="match status" value="1"/>
</dbReference>
<dbReference type="PANTHER" id="PTHR24029:SF0">
    <property type="entry name" value="UVRABC SYSTEM PROTEIN B"/>
    <property type="match status" value="1"/>
</dbReference>
<dbReference type="Pfam" id="PF00271">
    <property type="entry name" value="Helicase_C"/>
    <property type="match status" value="1"/>
</dbReference>
<dbReference type="Pfam" id="PF04851">
    <property type="entry name" value="ResIII"/>
    <property type="match status" value="1"/>
</dbReference>
<dbReference type="Pfam" id="PF02151">
    <property type="entry name" value="UVR"/>
    <property type="match status" value="1"/>
</dbReference>
<dbReference type="Pfam" id="PF12344">
    <property type="entry name" value="UvrB"/>
    <property type="match status" value="1"/>
</dbReference>
<dbReference type="Pfam" id="PF17757">
    <property type="entry name" value="UvrB_inter"/>
    <property type="match status" value="1"/>
</dbReference>
<dbReference type="SMART" id="SM00487">
    <property type="entry name" value="DEXDc"/>
    <property type="match status" value="1"/>
</dbReference>
<dbReference type="SMART" id="SM00490">
    <property type="entry name" value="HELICc"/>
    <property type="match status" value="1"/>
</dbReference>
<dbReference type="SUPFAM" id="SSF46600">
    <property type="entry name" value="C-terminal UvrC-binding domain of UvrB"/>
    <property type="match status" value="1"/>
</dbReference>
<dbReference type="SUPFAM" id="SSF52540">
    <property type="entry name" value="P-loop containing nucleoside triphosphate hydrolases"/>
    <property type="match status" value="2"/>
</dbReference>
<dbReference type="PROSITE" id="PS51192">
    <property type="entry name" value="HELICASE_ATP_BIND_1"/>
    <property type="match status" value="1"/>
</dbReference>
<dbReference type="PROSITE" id="PS51194">
    <property type="entry name" value="HELICASE_CTER"/>
    <property type="match status" value="1"/>
</dbReference>
<dbReference type="PROSITE" id="PS50151">
    <property type="entry name" value="UVR"/>
    <property type="match status" value="1"/>
</dbReference>
<accession>Q32I48</accession>
<comment type="function">
    <text evidence="1">The UvrABC repair system catalyzes the recognition and processing of DNA lesions. A damage recognition complex composed of 2 UvrA and 2 UvrB subunits scans DNA for abnormalities. Upon binding of the UvrA(2)B(2) complex to a putative damaged site, the DNA wraps around one UvrB monomer. DNA wrap is dependent on ATP binding by UvrB and probably causes local melting of the DNA helix, facilitating insertion of UvrB beta-hairpin between the DNA strands. Then UvrB probes one DNA strand for the presence of a lesion. If a lesion is found the UvrA subunits dissociate and the UvrB-DNA preincision complex is formed. This complex is subsequently bound by UvrC and the second UvrB is released. If no lesion is found, the DNA wraps around the other UvrB subunit that will check the other stand for damage.</text>
</comment>
<comment type="subunit">
    <text evidence="1">Forms a heterotetramer with UvrA during the search for lesions. Interacts with UvrC in an incision complex.</text>
</comment>
<comment type="subcellular location">
    <subcellularLocation>
        <location evidence="1">Cytoplasm</location>
    </subcellularLocation>
</comment>
<comment type="domain">
    <text evidence="1">The beta-hairpin motif is involved in DNA binding.</text>
</comment>
<comment type="similarity">
    <text evidence="1">Belongs to the UvrB family.</text>
</comment>
<name>UVRB_SHIDS</name>
<evidence type="ECO:0000255" key="1">
    <source>
        <dbReference type="HAMAP-Rule" id="MF_00204"/>
    </source>
</evidence>
<reference key="1">
    <citation type="journal article" date="2005" name="Nucleic Acids Res.">
        <title>Genome dynamics and diversity of Shigella species, the etiologic agents of bacillary dysentery.</title>
        <authorList>
            <person name="Yang F."/>
            <person name="Yang J."/>
            <person name="Zhang X."/>
            <person name="Chen L."/>
            <person name="Jiang Y."/>
            <person name="Yan Y."/>
            <person name="Tang X."/>
            <person name="Wang J."/>
            <person name="Xiong Z."/>
            <person name="Dong J."/>
            <person name="Xue Y."/>
            <person name="Zhu Y."/>
            <person name="Xu X."/>
            <person name="Sun L."/>
            <person name="Chen S."/>
            <person name="Nie H."/>
            <person name="Peng J."/>
            <person name="Xu J."/>
            <person name="Wang Y."/>
            <person name="Yuan Z."/>
            <person name="Wen Y."/>
            <person name="Yao Z."/>
            <person name="Shen Y."/>
            <person name="Qiang B."/>
            <person name="Hou Y."/>
            <person name="Yu J."/>
            <person name="Jin Q."/>
        </authorList>
    </citation>
    <scope>NUCLEOTIDE SEQUENCE [LARGE SCALE GENOMIC DNA]</scope>
    <source>
        <strain>Sd197</strain>
    </source>
</reference>
<sequence>MSKPFKLNSAFKPSGDQPEAIRRLEEGLEDGLAHQTLLGVTGSGKTFTIANVIADLQRPTMVLAPNKTLAAQLYGEMKEFFPENAVEYFVSYYDYYQPEAYVPSSDTFIEKDASVNEHIEQMRLSATKAMLERRDVVVVASVSAIYGLGDPDLYLKMMLHLTVGMIIDQRAILRRLAELQYARNDQAFQRGTFRVRGEVIDIFPAESDDIALRVELFDEEVERLSLFDPLTGQIVSTIPRFTIYPKTHYVTPRERIVQAMEEIKEELAARRKVLLENNKLLEEQRLTQRTQFDLEMMNELGYCSGIENYSRFLSGRGPGEPPPTLFDYLPADGLLVVDESHVTIPQIGGMYRGDRARKETLVEYGFRLPSALDNRPLKFEEFEALAPQTIYVSATPGNYELEKSGGDVVDQVVRPTGLLDPIIEVRPVATQVDDLLSEIRQRAAINERVLVTTLTKRMAEDLTEYLEEHGERVRYLHSDIDTVERMEIIRDLRLGEFDVLVGINLLREGLDMPEVSLVAILDADKEGFLRSERSLIQTIGRAARNVNGKAILYGDKITPSMAKAIGETERRREKQQKYNEEHGITPQGLNKKVVDILALGQNIAKTKAKGRGKSRPIVEPDNVPMDMSPKALLQKIHELEGLMMQHAQNLEFEEAAQIRDQLHQLRELFIAAS</sequence>
<organism>
    <name type="scientific">Shigella dysenteriae serotype 1 (strain Sd197)</name>
    <dbReference type="NCBI Taxonomy" id="300267"/>
    <lineage>
        <taxon>Bacteria</taxon>
        <taxon>Pseudomonadati</taxon>
        <taxon>Pseudomonadota</taxon>
        <taxon>Gammaproteobacteria</taxon>
        <taxon>Enterobacterales</taxon>
        <taxon>Enterobacteriaceae</taxon>
        <taxon>Shigella</taxon>
    </lineage>
</organism>
<feature type="chain" id="PRO_0000227360" description="UvrABC system protein B">
    <location>
        <begin position="1"/>
        <end position="673"/>
    </location>
</feature>
<feature type="domain" description="Helicase ATP-binding" evidence="1">
    <location>
        <begin position="26"/>
        <end position="414"/>
    </location>
</feature>
<feature type="domain" description="Helicase C-terminal" evidence="1">
    <location>
        <begin position="431"/>
        <end position="597"/>
    </location>
</feature>
<feature type="domain" description="UVR" evidence="1">
    <location>
        <begin position="633"/>
        <end position="668"/>
    </location>
</feature>
<feature type="short sequence motif" description="Beta-hairpin">
    <location>
        <begin position="92"/>
        <end position="115"/>
    </location>
</feature>
<feature type="binding site" evidence="1">
    <location>
        <begin position="39"/>
        <end position="46"/>
    </location>
    <ligand>
        <name>ATP</name>
        <dbReference type="ChEBI" id="CHEBI:30616"/>
    </ligand>
</feature>
<protein>
    <recommendedName>
        <fullName evidence="1">UvrABC system protein B</fullName>
        <shortName evidence="1">Protein UvrB</shortName>
    </recommendedName>
    <alternativeName>
        <fullName evidence="1">Excinuclease ABC subunit B</fullName>
    </alternativeName>
</protein>